<keyword id="KW-0028">Amino-acid biosynthesis</keyword>
<keyword id="KW-0963">Cytoplasm</keyword>
<keyword id="KW-0368">Histidine biosynthesis</keyword>
<keyword id="KW-0378">Hydrolase</keyword>
<keyword id="KW-0456">Lyase</keyword>
<keyword id="KW-0460">Magnesium</keyword>
<keyword id="KW-0479">Metal-binding</keyword>
<keyword id="KW-0511">Multifunctional enzyme</keyword>
<proteinExistence type="inferred from homology"/>
<dbReference type="EC" id="3.1.3.15" evidence="1"/>
<dbReference type="EC" id="4.2.1.19" evidence="1"/>
<dbReference type="EMBL" id="AP006841">
    <property type="protein sequence ID" value="BAD49932.1"/>
    <property type="molecule type" value="Genomic_DNA"/>
</dbReference>
<dbReference type="RefSeq" id="WP_005789124.1">
    <property type="nucleotide sequence ID" value="NC_006347.1"/>
</dbReference>
<dbReference type="RefSeq" id="YP_100466.1">
    <property type="nucleotide sequence ID" value="NC_006347.1"/>
</dbReference>
<dbReference type="SMR" id="Q64RE9"/>
<dbReference type="STRING" id="295405.BF3187"/>
<dbReference type="GeneID" id="60369358"/>
<dbReference type="KEGG" id="bfr:BF3187"/>
<dbReference type="PATRIC" id="fig|295405.11.peg.3054"/>
<dbReference type="HOGENOM" id="CLU_044308_0_0_10"/>
<dbReference type="OrthoDB" id="9790411at2"/>
<dbReference type="UniPathway" id="UPA00031">
    <property type="reaction ID" value="UER00011"/>
</dbReference>
<dbReference type="UniPathway" id="UPA00031">
    <property type="reaction ID" value="UER00013"/>
</dbReference>
<dbReference type="Proteomes" id="UP000002197">
    <property type="component" value="Chromosome"/>
</dbReference>
<dbReference type="GO" id="GO:0005737">
    <property type="term" value="C:cytoplasm"/>
    <property type="evidence" value="ECO:0007669"/>
    <property type="project" value="UniProtKB-SubCell"/>
</dbReference>
<dbReference type="GO" id="GO:0004401">
    <property type="term" value="F:histidinol-phosphatase activity"/>
    <property type="evidence" value="ECO:0007669"/>
    <property type="project" value="UniProtKB-UniRule"/>
</dbReference>
<dbReference type="GO" id="GO:0004424">
    <property type="term" value="F:imidazoleglycerol-phosphate dehydratase activity"/>
    <property type="evidence" value="ECO:0007669"/>
    <property type="project" value="UniProtKB-UniRule"/>
</dbReference>
<dbReference type="GO" id="GO:0046872">
    <property type="term" value="F:metal ion binding"/>
    <property type="evidence" value="ECO:0007669"/>
    <property type="project" value="UniProtKB-KW"/>
</dbReference>
<dbReference type="GO" id="GO:0000105">
    <property type="term" value="P:L-histidine biosynthetic process"/>
    <property type="evidence" value="ECO:0007669"/>
    <property type="project" value="UniProtKB-UniRule"/>
</dbReference>
<dbReference type="CDD" id="cd07914">
    <property type="entry name" value="IGPD"/>
    <property type="match status" value="1"/>
</dbReference>
<dbReference type="FunFam" id="3.30.230.40:FF:000001">
    <property type="entry name" value="Imidazoleglycerol-phosphate dehydratase HisB"/>
    <property type="match status" value="1"/>
</dbReference>
<dbReference type="FunFam" id="3.30.230.40:FF:000003">
    <property type="entry name" value="Imidazoleglycerol-phosphate dehydratase HisB"/>
    <property type="match status" value="1"/>
</dbReference>
<dbReference type="Gene3D" id="3.40.50.1000">
    <property type="entry name" value="HAD superfamily/HAD-like"/>
    <property type="match status" value="1"/>
</dbReference>
<dbReference type="Gene3D" id="3.30.230.40">
    <property type="entry name" value="Imidazole glycerol phosphate dehydratase, domain 1"/>
    <property type="match status" value="2"/>
</dbReference>
<dbReference type="HAMAP" id="MF_01022">
    <property type="entry name" value="Bifunc_HisB"/>
    <property type="match status" value="1"/>
</dbReference>
<dbReference type="HAMAP" id="MF_00076">
    <property type="entry name" value="HisB"/>
    <property type="match status" value="1"/>
</dbReference>
<dbReference type="InterPro" id="IPR036412">
    <property type="entry name" value="HAD-like_sf"/>
</dbReference>
<dbReference type="InterPro" id="IPR006549">
    <property type="entry name" value="HAD-SF_hydro_IIIA"/>
</dbReference>
<dbReference type="InterPro" id="IPR023214">
    <property type="entry name" value="HAD_sf"/>
</dbReference>
<dbReference type="InterPro" id="IPR020566">
    <property type="entry name" value="His_synth_bifunc_HisB"/>
</dbReference>
<dbReference type="InterPro" id="IPR005954">
    <property type="entry name" value="HisB_N"/>
</dbReference>
<dbReference type="InterPro" id="IPR006543">
    <property type="entry name" value="Histidinol-phos"/>
</dbReference>
<dbReference type="InterPro" id="IPR038494">
    <property type="entry name" value="IGPD_sf"/>
</dbReference>
<dbReference type="InterPro" id="IPR000807">
    <property type="entry name" value="ImidazoleglycerolP_deHydtase"/>
</dbReference>
<dbReference type="InterPro" id="IPR020565">
    <property type="entry name" value="ImidazoleglycerP_deHydtase_CS"/>
</dbReference>
<dbReference type="InterPro" id="IPR020568">
    <property type="entry name" value="Ribosomal_Su5_D2-typ_SF"/>
</dbReference>
<dbReference type="NCBIfam" id="TIGR01662">
    <property type="entry name" value="HAD-SF-IIIA"/>
    <property type="match status" value="1"/>
</dbReference>
<dbReference type="NCBIfam" id="TIGR01261">
    <property type="entry name" value="hisB_Nterm"/>
    <property type="match status" value="1"/>
</dbReference>
<dbReference type="NCBIfam" id="TIGR01656">
    <property type="entry name" value="Histidinol-ppas"/>
    <property type="match status" value="1"/>
</dbReference>
<dbReference type="NCBIfam" id="NF002111">
    <property type="entry name" value="PRK00951.2-1"/>
    <property type="match status" value="1"/>
</dbReference>
<dbReference type="NCBIfam" id="NF002114">
    <property type="entry name" value="PRK00951.2-4"/>
    <property type="match status" value="1"/>
</dbReference>
<dbReference type="NCBIfam" id="NF003937">
    <property type="entry name" value="PRK05446.1"/>
    <property type="match status" value="1"/>
</dbReference>
<dbReference type="PANTHER" id="PTHR23133:SF2">
    <property type="entry name" value="IMIDAZOLEGLYCEROL-PHOSPHATE DEHYDRATASE"/>
    <property type="match status" value="1"/>
</dbReference>
<dbReference type="PANTHER" id="PTHR23133">
    <property type="entry name" value="IMIDAZOLEGLYCEROL-PHOSPHATE DEHYDRATASE HIS7"/>
    <property type="match status" value="1"/>
</dbReference>
<dbReference type="Pfam" id="PF13242">
    <property type="entry name" value="Hydrolase_like"/>
    <property type="match status" value="1"/>
</dbReference>
<dbReference type="Pfam" id="PF00475">
    <property type="entry name" value="IGPD"/>
    <property type="match status" value="1"/>
</dbReference>
<dbReference type="SUPFAM" id="SSF56784">
    <property type="entry name" value="HAD-like"/>
    <property type="match status" value="1"/>
</dbReference>
<dbReference type="SUPFAM" id="SSF54211">
    <property type="entry name" value="Ribosomal protein S5 domain 2-like"/>
    <property type="match status" value="2"/>
</dbReference>
<dbReference type="PROSITE" id="PS00954">
    <property type="entry name" value="IGP_DEHYDRATASE_1"/>
    <property type="match status" value="1"/>
</dbReference>
<dbReference type="PROSITE" id="PS00955">
    <property type="entry name" value="IGP_DEHYDRATASE_2"/>
    <property type="match status" value="1"/>
</dbReference>
<reference key="1">
    <citation type="journal article" date="2004" name="Proc. Natl. Acad. Sci. U.S.A.">
        <title>Genomic analysis of Bacteroides fragilis reveals extensive DNA inversions regulating cell surface adaptation.</title>
        <authorList>
            <person name="Kuwahara T."/>
            <person name="Yamashita A."/>
            <person name="Hirakawa H."/>
            <person name="Nakayama H."/>
            <person name="Toh H."/>
            <person name="Okada N."/>
            <person name="Kuhara S."/>
            <person name="Hattori M."/>
            <person name="Hayashi T."/>
            <person name="Ohnishi Y."/>
        </authorList>
    </citation>
    <scope>NUCLEOTIDE SEQUENCE [LARGE SCALE GENOMIC DNA]</scope>
    <source>
        <strain>YCH46</strain>
    </source>
</reference>
<evidence type="ECO:0000255" key="1">
    <source>
        <dbReference type="HAMAP-Rule" id="MF_01022"/>
    </source>
</evidence>
<name>HIS7_BACFR</name>
<protein>
    <recommendedName>
        <fullName evidence="1">Histidine biosynthesis bifunctional protein HisB</fullName>
    </recommendedName>
    <domain>
        <recommendedName>
            <fullName evidence="1">Histidinol-phosphatase</fullName>
            <ecNumber evidence="1">3.1.3.15</ecNumber>
        </recommendedName>
    </domain>
    <domain>
        <recommendedName>
            <fullName evidence="1">Imidazoleglycerol-phosphate dehydratase</fullName>
            <shortName evidence="1">IGPD</shortName>
            <ecNumber evidence="1">4.2.1.19</ecNumber>
        </recommendedName>
    </domain>
</protein>
<comment type="catalytic activity">
    <reaction evidence="1">
        <text>D-erythro-1-(imidazol-4-yl)glycerol 3-phosphate = 3-(imidazol-4-yl)-2-oxopropyl phosphate + H2O</text>
        <dbReference type="Rhea" id="RHEA:11040"/>
        <dbReference type="ChEBI" id="CHEBI:15377"/>
        <dbReference type="ChEBI" id="CHEBI:57766"/>
        <dbReference type="ChEBI" id="CHEBI:58278"/>
        <dbReference type="EC" id="4.2.1.19"/>
    </reaction>
</comment>
<comment type="catalytic activity">
    <reaction evidence="1">
        <text>L-histidinol phosphate + H2O = L-histidinol + phosphate</text>
        <dbReference type="Rhea" id="RHEA:14465"/>
        <dbReference type="ChEBI" id="CHEBI:15377"/>
        <dbReference type="ChEBI" id="CHEBI:43474"/>
        <dbReference type="ChEBI" id="CHEBI:57699"/>
        <dbReference type="ChEBI" id="CHEBI:57980"/>
        <dbReference type="EC" id="3.1.3.15"/>
    </reaction>
</comment>
<comment type="cofactor">
    <cofactor evidence="1">
        <name>Mg(2+)</name>
        <dbReference type="ChEBI" id="CHEBI:18420"/>
    </cofactor>
</comment>
<comment type="pathway">
    <text evidence="1">Amino-acid biosynthesis; L-histidine biosynthesis; L-histidine from 5-phospho-alpha-D-ribose 1-diphosphate: step 6/9.</text>
</comment>
<comment type="pathway">
    <text evidence="1">Amino-acid biosynthesis; L-histidine biosynthesis; L-histidine from 5-phospho-alpha-D-ribose 1-diphosphate: step 8/9.</text>
</comment>
<comment type="subcellular location">
    <subcellularLocation>
        <location evidence="1">Cytoplasm</location>
    </subcellularLocation>
</comment>
<comment type="similarity">
    <text evidence="1">In the N-terminal section; belongs to the histidinol-phosphatase family.</text>
</comment>
<comment type="similarity">
    <text evidence="1">In the C-terminal section; belongs to the imidazoleglycerol-phosphate dehydratase family.</text>
</comment>
<organism>
    <name type="scientific">Bacteroides fragilis (strain YCH46)</name>
    <dbReference type="NCBI Taxonomy" id="295405"/>
    <lineage>
        <taxon>Bacteria</taxon>
        <taxon>Pseudomonadati</taxon>
        <taxon>Bacteroidota</taxon>
        <taxon>Bacteroidia</taxon>
        <taxon>Bacteroidales</taxon>
        <taxon>Bacteroidaceae</taxon>
        <taxon>Bacteroides</taxon>
    </lineage>
</organism>
<accession>Q64RE9</accession>
<gene>
    <name evidence="1" type="primary">hisB</name>
    <name type="ordered locus">BF3187</name>
</gene>
<sequence>MKKKVLFIDRDGTLVIEPPVDYQLDSLEKLEFYPKVFRNLGFIRSKLDFEFVMVTNQDGLGTSSFPEETFWPAHNLMLKTLAGEGITFDDILIDRSMPEDCASTRKPRTGMLTKYISNPEYDLEGSFVIGDRPTDVELAKNIGCRAIYLQESIDLLKEKGLETYCALATTDWDRVAEFLFAGERRAEIRRTTKETDILVALNLDGKGTCDISTGLGFFDHMLEQIGKHSGMDLTIRVKGDLEVDEHHTIEDTAIALGECIYQALGSKRGIERYGYALPMDDCLCRVCLDFGGRPWLVWDAEFKREKIGEMPTEMFLHFFKSLSDAAKMNLNIKAEGQNEHHKIEGIFKALARALKMALKRDIYHFELPSSKGVL</sequence>
<feature type="chain" id="PRO_0000158199" description="Histidine biosynthesis bifunctional protein HisB">
    <location>
        <begin position="1"/>
        <end position="374"/>
    </location>
</feature>
<feature type="region of interest" description="Histidinol-phosphatase" evidence="1">
    <location>
        <begin position="1"/>
        <end position="183"/>
    </location>
</feature>
<feature type="region of interest" description="Imidazoleglycerol-phosphate dehydratase" evidence="1">
    <location>
        <begin position="184"/>
        <end position="374"/>
    </location>
</feature>
<feature type="active site" description="Nucleophile" evidence="1">
    <location>
        <position position="9"/>
    </location>
</feature>
<feature type="active site" description="Proton donor" evidence="1">
    <location>
        <position position="11"/>
    </location>
</feature>
<feature type="binding site" evidence="1">
    <location>
        <position position="9"/>
    </location>
    <ligand>
        <name>Mg(2+)</name>
        <dbReference type="ChEBI" id="CHEBI:18420"/>
    </ligand>
</feature>
<feature type="binding site" evidence="1">
    <location>
        <position position="11"/>
    </location>
    <ligand>
        <name>Mg(2+)</name>
        <dbReference type="ChEBI" id="CHEBI:18420"/>
    </ligand>
</feature>
<feature type="binding site" evidence="1">
    <location>
        <position position="131"/>
    </location>
    <ligand>
        <name>Mg(2+)</name>
        <dbReference type="ChEBI" id="CHEBI:18420"/>
    </ligand>
</feature>